<protein>
    <recommendedName>
        <fullName evidence="1">Small ribosomal subunit protein uS14</fullName>
    </recommendedName>
    <alternativeName>
        <fullName evidence="2">30S ribosomal protein S14</fullName>
    </alternativeName>
</protein>
<keyword id="KW-1185">Reference proteome</keyword>
<keyword id="KW-0687">Ribonucleoprotein</keyword>
<keyword id="KW-0689">Ribosomal protein</keyword>
<keyword id="KW-0694">RNA-binding</keyword>
<keyword id="KW-0699">rRNA-binding</keyword>
<reference key="1">
    <citation type="journal article" date="2002" name="J. Bacteriol.">
        <title>Genome sequence and analysis of the oral bacterium Fusobacterium nucleatum strain ATCC 25586.</title>
        <authorList>
            <person name="Kapatral V."/>
            <person name="Anderson I."/>
            <person name="Ivanova N."/>
            <person name="Reznik G."/>
            <person name="Los T."/>
            <person name="Lykidis A."/>
            <person name="Bhattacharyya A."/>
            <person name="Bartman A."/>
            <person name="Gardner W."/>
            <person name="Grechkin G."/>
            <person name="Zhu L."/>
            <person name="Vasieva O."/>
            <person name="Chu L."/>
            <person name="Kogan Y."/>
            <person name="Chaga O."/>
            <person name="Goltsman E."/>
            <person name="Bernal A."/>
            <person name="Larsen N."/>
            <person name="D'Souza M."/>
            <person name="Walunas T."/>
            <person name="Pusch G."/>
            <person name="Haselkorn R."/>
            <person name="Fonstein M."/>
            <person name="Kyrpides N.C."/>
            <person name="Overbeek R."/>
        </authorList>
    </citation>
    <scope>NUCLEOTIDE SEQUENCE [LARGE SCALE GENOMIC DNA]</scope>
    <source>
        <strain>ATCC 25586 / DSM 15643 / BCRC 10681 / CIP 101130 / JCM 8532 / KCTC 2640 / LMG 13131 / VPI 4355</strain>
    </source>
</reference>
<accession>Q8RIG9</accession>
<dbReference type="EMBL" id="AE009951">
    <property type="protein sequence ID" value="AAL93746.1"/>
    <property type="molecule type" value="Genomic_DNA"/>
</dbReference>
<dbReference type="RefSeq" id="NP_602447.1">
    <property type="nucleotide sequence ID" value="NC_003454.1"/>
</dbReference>
<dbReference type="RefSeq" id="WP_011015715.1">
    <property type="nucleotide sequence ID" value="NZ_CP028101.1"/>
</dbReference>
<dbReference type="SMR" id="Q8RIG9"/>
<dbReference type="FunCoup" id="Q8RIG9">
    <property type="interactions" value="260"/>
</dbReference>
<dbReference type="STRING" id="190304.FN1631"/>
<dbReference type="PaxDb" id="190304-FN1631"/>
<dbReference type="EnsemblBacteria" id="AAL93746">
    <property type="protein sequence ID" value="AAL93746"/>
    <property type="gene ID" value="FN1631"/>
</dbReference>
<dbReference type="GeneID" id="79782570"/>
<dbReference type="KEGG" id="fnu:FN1631"/>
<dbReference type="PATRIC" id="fig|190304.8.peg.124"/>
<dbReference type="eggNOG" id="COG0199">
    <property type="taxonomic scope" value="Bacteria"/>
</dbReference>
<dbReference type="HOGENOM" id="CLU_139869_0_1_0"/>
<dbReference type="InParanoid" id="Q8RIG9"/>
<dbReference type="BioCyc" id="FNUC190304:G1FZS-134-MONOMER"/>
<dbReference type="Proteomes" id="UP000002521">
    <property type="component" value="Chromosome"/>
</dbReference>
<dbReference type="GO" id="GO:0005737">
    <property type="term" value="C:cytoplasm"/>
    <property type="evidence" value="ECO:0007669"/>
    <property type="project" value="UniProtKB-ARBA"/>
</dbReference>
<dbReference type="GO" id="GO:0015935">
    <property type="term" value="C:small ribosomal subunit"/>
    <property type="evidence" value="ECO:0000318"/>
    <property type="project" value="GO_Central"/>
</dbReference>
<dbReference type="GO" id="GO:0019843">
    <property type="term" value="F:rRNA binding"/>
    <property type="evidence" value="ECO:0007669"/>
    <property type="project" value="UniProtKB-UniRule"/>
</dbReference>
<dbReference type="GO" id="GO:0003735">
    <property type="term" value="F:structural constituent of ribosome"/>
    <property type="evidence" value="ECO:0000318"/>
    <property type="project" value="GO_Central"/>
</dbReference>
<dbReference type="GO" id="GO:0006412">
    <property type="term" value="P:translation"/>
    <property type="evidence" value="ECO:0000318"/>
    <property type="project" value="GO_Central"/>
</dbReference>
<dbReference type="FunFam" id="1.10.287.1480:FF:000001">
    <property type="entry name" value="30S ribosomal protein S14"/>
    <property type="match status" value="1"/>
</dbReference>
<dbReference type="Gene3D" id="1.10.287.1480">
    <property type="match status" value="1"/>
</dbReference>
<dbReference type="HAMAP" id="MF_00537">
    <property type="entry name" value="Ribosomal_uS14_1"/>
    <property type="match status" value="1"/>
</dbReference>
<dbReference type="InterPro" id="IPR001209">
    <property type="entry name" value="Ribosomal_uS14"/>
</dbReference>
<dbReference type="InterPro" id="IPR023036">
    <property type="entry name" value="Ribosomal_uS14_bac/plastid"/>
</dbReference>
<dbReference type="InterPro" id="IPR018271">
    <property type="entry name" value="Ribosomal_uS14_CS"/>
</dbReference>
<dbReference type="NCBIfam" id="NF006477">
    <property type="entry name" value="PRK08881.1"/>
    <property type="match status" value="1"/>
</dbReference>
<dbReference type="PANTHER" id="PTHR19836">
    <property type="entry name" value="30S RIBOSOMAL PROTEIN S14"/>
    <property type="match status" value="1"/>
</dbReference>
<dbReference type="PANTHER" id="PTHR19836:SF19">
    <property type="entry name" value="SMALL RIBOSOMAL SUBUNIT PROTEIN US14M"/>
    <property type="match status" value="1"/>
</dbReference>
<dbReference type="Pfam" id="PF00253">
    <property type="entry name" value="Ribosomal_S14"/>
    <property type="match status" value="1"/>
</dbReference>
<dbReference type="SUPFAM" id="SSF57716">
    <property type="entry name" value="Glucocorticoid receptor-like (DNA-binding domain)"/>
    <property type="match status" value="1"/>
</dbReference>
<dbReference type="PROSITE" id="PS00527">
    <property type="entry name" value="RIBOSOMAL_S14"/>
    <property type="match status" value="1"/>
</dbReference>
<proteinExistence type="inferred from homology"/>
<organism>
    <name type="scientific">Fusobacterium nucleatum subsp. nucleatum (strain ATCC 25586 / DSM 15643 / BCRC 10681 / CIP 101130 / JCM 8532 / KCTC 2640 / LMG 13131 / VPI 4355)</name>
    <dbReference type="NCBI Taxonomy" id="190304"/>
    <lineage>
        <taxon>Bacteria</taxon>
        <taxon>Fusobacteriati</taxon>
        <taxon>Fusobacteriota</taxon>
        <taxon>Fusobacteriia</taxon>
        <taxon>Fusobacteriales</taxon>
        <taxon>Fusobacteriaceae</taxon>
        <taxon>Fusobacterium</taxon>
    </lineage>
</organism>
<comment type="function">
    <text evidence="1">Binds 16S rRNA, required for the assembly of 30S particles and may also be responsible for determining the conformation of the 16S rRNA at the A site.</text>
</comment>
<comment type="subunit">
    <text evidence="1">Part of the 30S ribosomal subunit. Contacts proteins S3 and S10.</text>
</comment>
<comment type="similarity">
    <text evidence="1">Belongs to the universal ribosomal protein uS14 family.</text>
</comment>
<feature type="chain" id="PRO_1000128411" description="Small ribosomal subunit protein uS14">
    <location>
        <begin position="1"/>
        <end position="95"/>
    </location>
</feature>
<name>RS14_FUSNN</name>
<gene>
    <name evidence="1" type="primary">rpsN</name>
    <name type="ordered locus">FN1631</name>
</gene>
<sequence length="95" mass="10827">MAKKSMIARDVKRAKLVDKYAEKRAELKKRIAAGDMEAMFELNKLPKDSSAVRKRNRCQLDGRPRGYMREFGISRVKFRQLAGAGVIPGVKKSSW</sequence>
<evidence type="ECO:0000255" key="1">
    <source>
        <dbReference type="HAMAP-Rule" id="MF_00537"/>
    </source>
</evidence>
<evidence type="ECO:0000305" key="2"/>